<reference key="1">
    <citation type="journal article" date="2011" name="J. Bacteriol.">
        <title>Comparative genomics of 28 Salmonella enterica isolates: evidence for CRISPR-mediated adaptive sublineage evolution.</title>
        <authorList>
            <person name="Fricke W.F."/>
            <person name="Mammel M.K."/>
            <person name="McDermott P.F."/>
            <person name="Tartera C."/>
            <person name="White D.G."/>
            <person name="Leclerc J.E."/>
            <person name="Ravel J."/>
            <person name="Cebula T.A."/>
        </authorList>
    </citation>
    <scope>NUCLEOTIDE SEQUENCE [LARGE SCALE GENOMIC DNA]</scope>
    <source>
        <strain>CT_02021853</strain>
    </source>
</reference>
<comment type="catalytic activity">
    <reaction evidence="1">
        <text>D-glucuronate = D-fructuronate</text>
        <dbReference type="Rhea" id="RHEA:13049"/>
        <dbReference type="ChEBI" id="CHEBI:58720"/>
        <dbReference type="ChEBI" id="CHEBI:59863"/>
        <dbReference type="EC" id="5.3.1.12"/>
    </reaction>
</comment>
<comment type="catalytic activity">
    <reaction evidence="1">
        <text>aldehydo-D-galacturonate = keto-D-tagaturonate</text>
        <dbReference type="Rhea" id="RHEA:27702"/>
        <dbReference type="ChEBI" id="CHEBI:12952"/>
        <dbReference type="ChEBI" id="CHEBI:17886"/>
        <dbReference type="EC" id="5.3.1.12"/>
    </reaction>
</comment>
<comment type="pathway">
    <text evidence="1">Carbohydrate metabolism; pentose and glucuronate interconversion.</text>
</comment>
<comment type="similarity">
    <text evidence="1">Belongs to the metallo-dependent hydrolases superfamily. Uronate isomerase family.</text>
</comment>
<dbReference type="EC" id="5.3.1.12" evidence="1"/>
<dbReference type="EMBL" id="CP001144">
    <property type="protein sequence ID" value="ACH75486.1"/>
    <property type="molecule type" value="Genomic_DNA"/>
</dbReference>
<dbReference type="RefSeq" id="WP_000190182.1">
    <property type="nucleotide sequence ID" value="NC_011205.1"/>
</dbReference>
<dbReference type="SMR" id="B5FV01"/>
<dbReference type="KEGG" id="sed:SeD_A3482"/>
<dbReference type="HOGENOM" id="CLU_044465_1_0_6"/>
<dbReference type="UniPathway" id="UPA00246"/>
<dbReference type="Proteomes" id="UP000008322">
    <property type="component" value="Chromosome"/>
</dbReference>
<dbReference type="GO" id="GO:0008880">
    <property type="term" value="F:glucuronate isomerase activity"/>
    <property type="evidence" value="ECO:0007669"/>
    <property type="project" value="UniProtKB-UniRule"/>
</dbReference>
<dbReference type="GO" id="GO:0019698">
    <property type="term" value="P:D-galacturonate catabolic process"/>
    <property type="evidence" value="ECO:0007669"/>
    <property type="project" value="TreeGrafter"/>
</dbReference>
<dbReference type="GO" id="GO:0042840">
    <property type="term" value="P:D-glucuronate catabolic process"/>
    <property type="evidence" value="ECO:0007669"/>
    <property type="project" value="TreeGrafter"/>
</dbReference>
<dbReference type="Gene3D" id="3.20.20.140">
    <property type="entry name" value="Metal-dependent hydrolases"/>
    <property type="match status" value="1"/>
</dbReference>
<dbReference type="Gene3D" id="1.10.2020.10">
    <property type="entry name" value="uronate isomerase, domain 2, chain A"/>
    <property type="match status" value="1"/>
</dbReference>
<dbReference type="HAMAP" id="MF_00675">
    <property type="entry name" value="UxaC"/>
    <property type="match status" value="1"/>
</dbReference>
<dbReference type="InterPro" id="IPR032466">
    <property type="entry name" value="Metal_Hydrolase"/>
</dbReference>
<dbReference type="InterPro" id="IPR003766">
    <property type="entry name" value="Uronate_isomerase"/>
</dbReference>
<dbReference type="NCBIfam" id="NF002794">
    <property type="entry name" value="PRK02925.1"/>
    <property type="match status" value="1"/>
</dbReference>
<dbReference type="PANTHER" id="PTHR30068">
    <property type="entry name" value="URONATE ISOMERASE"/>
    <property type="match status" value="1"/>
</dbReference>
<dbReference type="PANTHER" id="PTHR30068:SF4">
    <property type="entry name" value="URONATE ISOMERASE"/>
    <property type="match status" value="1"/>
</dbReference>
<dbReference type="Pfam" id="PF02614">
    <property type="entry name" value="UxaC"/>
    <property type="match status" value="1"/>
</dbReference>
<dbReference type="SUPFAM" id="SSF51556">
    <property type="entry name" value="Metallo-dependent hydrolases"/>
    <property type="match status" value="1"/>
</dbReference>
<sequence>MATFMTEDFLLKNDIARTLYHKYAAPMPIYDFHCHLSPQEIADDRRFDNLGQIWLEGDHYKWRALRSAGVDESLITGKETSDYEKYMAWANTVPKTLGNPLYHWTHLELRRPFGITGTLFGPDTAESIWTQCNEKLATPAFSARGIMQQMNVRMVGTTDDPIDSLEYHRQIAADDSIDIEVAPSWRPDKVFKIELDGFVDYLRKLEAAADVSITRFDDLRQALTRRLDHFAACGCRASDHGIETLRFAPVPDDAQLDAILGKRLAGETLSELEIAQFTTAVLVWLGRQYAARGWVMQLHIGAIRNNNTRMFRLLGPDTGFDSIGDNNISWALSRLLDSMDVTNELPKTILYCLNPRDNEVLATMIGNFQGPGIAGKVQFGSGWWFNDQKDGMLRQLEQLSQMGLLSQFVGMLTDSRSFLSYTRHEYFRRILCNLLGQWAQDGEIPDDEAMLSRMVQDICFNNAQRYFTIK</sequence>
<protein>
    <recommendedName>
        <fullName evidence="1">Uronate isomerase</fullName>
        <ecNumber evidence="1">5.3.1.12</ecNumber>
    </recommendedName>
    <alternativeName>
        <fullName evidence="1">Glucuronate isomerase</fullName>
    </alternativeName>
    <alternativeName>
        <fullName evidence="1">Uronic isomerase</fullName>
    </alternativeName>
</protein>
<proteinExistence type="inferred from homology"/>
<gene>
    <name evidence="1" type="primary">uxaC</name>
    <name type="ordered locus">SeD_A3482</name>
</gene>
<keyword id="KW-0413">Isomerase</keyword>
<accession>B5FV01</accession>
<name>UXAC_SALDC</name>
<organism>
    <name type="scientific">Salmonella dublin (strain CT_02021853)</name>
    <dbReference type="NCBI Taxonomy" id="439851"/>
    <lineage>
        <taxon>Bacteria</taxon>
        <taxon>Pseudomonadati</taxon>
        <taxon>Pseudomonadota</taxon>
        <taxon>Gammaproteobacteria</taxon>
        <taxon>Enterobacterales</taxon>
        <taxon>Enterobacteriaceae</taxon>
        <taxon>Salmonella</taxon>
    </lineage>
</organism>
<evidence type="ECO:0000255" key="1">
    <source>
        <dbReference type="HAMAP-Rule" id="MF_00675"/>
    </source>
</evidence>
<feature type="chain" id="PRO_1000131601" description="Uronate isomerase">
    <location>
        <begin position="1"/>
        <end position="470"/>
    </location>
</feature>